<protein>
    <recommendedName>
        <fullName evidence="3">Conotoxin Cal6.35</fullName>
    </recommendedName>
    <alternativeName>
        <fullName evidence="2">O1_Cal6.35</fullName>
    </alternativeName>
</protein>
<comment type="function">
    <text evidence="3">Probable neurotoxin.</text>
</comment>
<comment type="subcellular location">
    <subcellularLocation>
        <location evidence="4">Secreted</location>
    </subcellularLocation>
</comment>
<comment type="tissue specificity">
    <text evidence="4">Expressed by the venom duct.</text>
</comment>
<comment type="domain">
    <text evidence="3">The cysteine framework is VI/VII (C-C-CC-C-C).</text>
</comment>
<comment type="domain">
    <text evidence="3">The presence of a 'disulfide through disulfide knot' structurally defines this protein as a knottin.</text>
</comment>
<comment type="similarity">
    <text evidence="3">Belongs to the conotoxin O1 superfamily.</text>
</comment>
<proteinExistence type="inferred from homology"/>
<organism>
    <name type="scientific">Californiconus californicus</name>
    <name type="common">California cone</name>
    <name type="synonym">Conus californicus</name>
    <dbReference type="NCBI Taxonomy" id="1736779"/>
    <lineage>
        <taxon>Eukaryota</taxon>
        <taxon>Metazoa</taxon>
        <taxon>Spiralia</taxon>
        <taxon>Lophotrochozoa</taxon>
        <taxon>Mollusca</taxon>
        <taxon>Gastropoda</taxon>
        <taxon>Caenogastropoda</taxon>
        <taxon>Neogastropoda</taxon>
        <taxon>Conoidea</taxon>
        <taxon>Conidae</taxon>
        <taxon>Californiconus</taxon>
    </lineage>
</organism>
<dbReference type="GO" id="GO:0005576">
    <property type="term" value="C:extracellular region"/>
    <property type="evidence" value="ECO:0007669"/>
    <property type="project" value="UniProtKB-SubCell"/>
</dbReference>
<dbReference type="GO" id="GO:0090729">
    <property type="term" value="F:toxin activity"/>
    <property type="evidence" value="ECO:0007669"/>
    <property type="project" value="UniProtKB-KW"/>
</dbReference>
<name>O1635_CONCL</name>
<accession>P0DTZ7</accession>
<sequence>MKLTCVLIVAVLILTACQVIAADEAEATNRAIKRGWFGEESSCWWCTGFNKCCEAAAVCQSVNSACP</sequence>
<feature type="signal peptide" evidence="1">
    <location>
        <begin position="1"/>
        <end position="22"/>
    </location>
</feature>
<feature type="chain" id="PRO_0000450979" description="Conotoxin Cal6.35" evidence="3">
    <location>
        <begin position="23"/>
        <end position="67"/>
    </location>
</feature>
<feature type="disulfide bond" evidence="3">
    <location>
        <begin position="43"/>
        <end position="53"/>
    </location>
</feature>
<feature type="disulfide bond" evidence="3">
    <location>
        <begin position="46"/>
        <end position="59"/>
    </location>
</feature>
<feature type="disulfide bond" evidence="3">
    <location>
        <begin position="52"/>
        <end position="66"/>
    </location>
</feature>
<reference key="1">
    <citation type="journal article" date="2019" name="Toxins">
        <title>The diversified O-superfamily in Californiconus californicus presents a conotoxin with antimycobacterial activity.</title>
        <authorList>
            <person name="Bernaldez-Sarabia J."/>
            <person name="Figueroa-Montiel A."/>
            <person name="Duenas S."/>
            <person name="Cervantes-Luevano K."/>
            <person name="Beltran J.A."/>
            <person name="Ortiz E."/>
            <person name="Jimenez S."/>
            <person name="Possani L.D."/>
            <person name="Paniagua-Solis J.F."/>
            <person name="Gonzalez-Canudas J."/>
            <person name="Licea-Navarro A."/>
        </authorList>
    </citation>
    <scope>NUCLEOTIDE SEQUENCE [MRNA]</scope>
    <source>
        <tissue>Venom duct</tissue>
    </source>
</reference>
<evidence type="ECO:0000255" key="1"/>
<evidence type="ECO:0000303" key="2">
    <source>
    </source>
</evidence>
<evidence type="ECO:0000305" key="3"/>
<evidence type="ECO:0000305" key="4">
    <source>
    </source>
</evidence>
<keyword id="KW-1015">Disulfide bond</keyword>
<keyword id="KW-0960">Knottin</keyword>
<keyword id="KW-0528">Neurotoxin</keyword>
<keyword id="KW-0964">Secreted</keyword>
<keyword id="KW-0732">Signal</keyword>
<keyword id="KW-0800">Toxin</keyword>